<dbReference type="EMBL" id="X95808">
    <property type="protein sequence ID" value="CAA65075.1"/>
    <property type="molecule type" value="mRNA"/>
</dbReference>
<dbReference type="EMBL" id="AB002383">
    <property type="protein sequence ID" value="BAA20839.2"/>
    <property type="status" value="ALT_INIT"/>
    <property type="molecule type" value="mRNA"/>
</dbReference>
<dbReference type="EMBL" id="BT007095">
    <property type="protein sequence ID" value="AAP35759.1"/>
    <property type="molecule type" value="mRNA"/>
</dbReference>
<dbReference type="EMBL" id="AL590762">
    <property type="status" value="NOT_ANNOTATED_CDS"/>
    <property type="molecule type" value="Genomic_DNA"/>
</dbReference>
<dbReference type="EMBL" id="CH471132">
    <property type="protein sequence ID" value="EAX05302.1"/>
    <property type="molecule type" value="Genomic_DNA"/>
</dbReference>
<dbReference type="EMBL" id="CH471132">
    <property type="protein sequence ID" value="EAX05303.1"/>
    <property type="molecule type" value="Genomic_DNA"/>
</dbReference>
<dbReference type="EMBL" id="BC069057">
    <property type="protein sequence ID" value="AAH69057.1"/>
    <property type="molecule type" value="mRNA"/>
</dbReference>
<dbReference type="EMBL" id="BC013009">
    <property type="protein sequence ID" value="AAH13009.1"/>
    <property type="molecule type" value="mRNA"/>
</dbReference>
<dbReference type="CCDS" id="CCDS14409.1">
    <molecule id="Q14202-1"/>
</dbReference>
<dbReference type="CCDS" id="CCDS55443.1">
    <molecule id="Q14202-3"/>
</dbReference>
<dbReference type="CCDS" id="CCDS55444.1">
    <molecule id="Q14202-2"/>
</dbReference>
<dbReference type="RefSeq" id="NP_001164633.1">
    <molecule id="Q14202-2"/>
    <property type="nucleotide sequence ID" value="NM_001171162.1"/>
</dbReference>
<dbReference type="RefSeq" id="NP_001164634.1">
    <molecule id="Q14202-3"/>
    <property type="nucleotide sequence ID" value="NM_001171163.1"/>
</dbReference>
<dbReference type="RefSeq" id="NP_005087.1">
    <molecule id="Q14202-1"/>
    <property type="nucleotide sequence ID" value="NM_005096.3"/>
</dbReference>
<dbReference type="RefSeq" id="NP_963893.1">
    <molecule id="Q14202-1"/>
    <property type="nucleotide sequence ID" value="NM_201599.3"/>
</dbReference>
<dbReference type="RefSeq" id="XP_005262366.1">
    <molecule id="Q14202-1"/>
    <property type="nucleotide sequence ID" value="XM_005262309.5"/>
</dbReference>
<dbReference type="RefSeq" id="XP_005262367.1">
    <molecule id="Q14202-2"/>
    <property type="nucleotide sequence ID" value="XM_005262310.4"/>
</dbReference>
<dbReference type="RefSeq" id="XP_011529364.1">
    <molecule id="Q14202-1"/>
    <property type="nucleotide sequence ID" value="XM_011531062.4"/>
</dbReference>
<dbReference type="RefSeq" id="XP_047298588.1">
    <molecule id="Q14202-1"/>
    <property type="nucleotide sequence ID" value="XM_047442632.1"/>
</dbReference>
<dbReference type="RefSeq" id="XP_047298589.1">
    <molecule id="Q14202-2"/>
    <property type="nucleotide sequence ID" value="XM_047442633.1"/>
</dbReference>
<dbReference type="RefSeq" id="XP_047298590.1">
    <molecule id="Q14202-2"/>
    <property type="nucleotide sequence ID" value="XM_047442634.1"/>
</dbReference>
<dbReference type="RefSeq" id="XP_047298591.1">
    <molecule id="Q14202-2"/>
    <property type="nucleotide sequence ID" value="XM_047442635.1"/>
</dbReference>
<dbReference type="RefSeq" id="XP_054184086.1">
    <molecule id="Q14202-1"/>
    <property type="nucleotide sequence ID" value="XM_054328111.1"/>
</dbReference>
<dbReference type="RefSeq" id="XP_054184087.1">
    <molecule id="Q14202-1"/>
    <property type="nucleotide sequence ID" value="XM_054328112.1"/>
</dbReference>
<dbReference type="RefSeq" id="XP_054184088.1">
    <molecule id="Q14202-1"/>
    <property type="nucleotide sequence ID" value="XM_054328113.1"/>
</dbReference>
<dbReference type="RefSeq" id="XP_054184089.1">
    <molecule id="Q14202-2"/>
    <property type="nucleotide sequence ID" value="XM_054328114.1"/>
</dbReference>
<dbReference type="RefSeq" id="XP_054184090.1">
    <molecule id="Q14202-2"/>
    <property type="nucleotide sequence ID" value="XM_054328115.1"/>
</dbReference>
<dbReference type="RefSeq" id="XP_054184091.1">
    <molecule id="Q14202-2"/>
    <property type="nucleotide sequence ID" value="XM_054328116.1"/>
</dbReference>
<dbReference type="RefSeq" id="XP_054184092.1">
    <molecule id="Q14202-2"/>
    <property type="nucleotide sequence ID" value="XM_054328117.1"/>
</dbReference>
<dbReference type="SMR" id="Q14202"/>
<dbReference type="BioGRID" id="114637">
    <property type="interactions" value="145"/>
</dbReference>
<dbReference type="CORUM" id="Q14202"/>
<dbReference type="FunCoup" id="Q14202">
    <property type="interactions" value="2202"/>
</dbReference>
<dbReference type="IntAct" id="Q14202">
    <property type="interactions" value="72"/>
</dbReference>
<dbReference type="MINT" id="Q14202"/>
<dbReference type="STRING" id="9606.ENSP00000322845"/>
<dbReference type="GlyGen" id="Q14202">
    <property type="glycosylation" value="2 sites, 1 O-linked glycan (1 site)"/>
</dbReference>
<dbReference type="iPTMnet" id="Q14202"/>
<dbReference type="PhosphoSitePlus" id="Q14202"/>
<dbReference type="BioMuta" id="ZMYM3"/>
<dbReference type="DMDM" id="12644413"/>
<dbReference type="jPOST" id="Q14202"/>
<dbReference type="MassIVE" id="Q14202"/>
<dbReference type="PaxDb" id="9606-ENSP00000322845"/>
<dbReference type="PeptideAtlas" id="Q14202"/>
<dbReference type="ProteomicsDB" id="59922">
    <molecule id="Q14202-1"/>
</dbReference>
<dbReference type="ProteomicsDB" id="59923">
    <molecule id="Q14202-2"/>
</dbReference>
<dbReference type="ProteomicsDB" id="59924">
    <molecule id="Q14202-3"/>
</dbReference>
<dbReference type="Pumba" id="Q14202"/>
<dbReference type="Antibodypedia" id="524">
    <property type="antibodies" value="178 antibodies from 25 providers"/>
</dbReference>
<dbReference type="DNASU" id="9203"/>
<dbReference type="Ensembl" id="ENST00000314425.9">
    <molecule id="Q14202-1"/>
    <property type="protein sequence ID" value="ENSP00000322845.5"/>
    <property type="gene ID" value="ENSG00000147130.14"/>
</dbReference>
<dbReference type="Ensembl" id="ENST00000373981.5">
    <molecule id="Q14202-3"/>
    <property type="protein sequence ID" value="ENSP00000363093.1"/>
    <property type="gene ID" value="ENSG00000147130.14"/>
</dbReference>
<dbReference type="Ensembl" id="ENST00000373998.5">
    <molecule id="Q14202-2"/>
    <property type="protein sequence ID" value="ENSP00000363110.1"/>
    <property type="gene ID" value="ENSG00000147130.14"/>
</dbReference>
<dbReference type="GeneID" id="9203"/>
<dbReference type="KEGG" id="hsa:9203"/>
<dbReference type="MANE-Select" id="ENST00000314425.9">
    <property type="protein sequence ID" value="ENSP00000322845.5"/>
    <property type="RefSeq nucleotide sequence ID" value="NM_201599.3"/>
    <property type="RefSeq protein sequence ID" value="NP_963893.1"/>
</dbReference>
<dbReference type="UCSC" id="uc004dzh.3">
    <molecule id="Q14202-1"/>
    <property type="organism name" value="human"/>
</dbReference>
<dbReference type="AGR" id="HGNC:13054"/>
<dbReference type="CTD" id="9203"/>
<dbReference type="DisGeNET" id="9203"/>
<dbReference type="GeneCards" id="ZMYM3"/>
<dbReference type="HGNC" id="HGNC:13054">
    <property type="gene designation" value="ZMYM3"/>
</dbReference>
<dbReference type="HPA" id="ENSG00000147130">
    <property type="expression patterns" value="Low tissue specificity"/>
</dbReference>
<dbReference type="MalaCards" id="ZMYM3"/>
<dbReference type="MIM" id="300061">
    <property type="type" value="gene"/>
</dbReference>
<dbReference type="MIM" id="301111">
    <property type="type" value="phenotype"/>
</dbReference>
<dbReference type="neXtProt" id="NX_Q14202"/>
<dbReference type="OpenTargets" id="ENSG00000147130"/>
<dbReference type="PharmGKB" id="PA37632"/>
<dbReference type="VEuPathDB" id="HostDB:ENSG00000147130"/>
<dbReference type="eggNOG" id="ENOG502QQQ9">
    <property type="taxonomic scope" value="Eukaryota"/>
</dbReference>
<dbReference type="GeneTree" id="ENSGT00940000160693"/>
<dbReference type="HOGENOM" id="CLU_004099_1_0_1"/>
<dbReference type="InParanoid" id="Q14202"/>
<dbReference type="OrthoDB" id="10025028at2759"/>
<dbReference type="PAN-GO" id="Q14202">
    <property type="GO annotations" value="0 GO annotations based on evolutionary models"/>
</dbReference>
<dbReference type="PhylomeDB" id="Q14202"/>
<dbReference type="TreeFam" id="TF336988"/>
<dbReference type="PathwayCommons" id="Q14202"/>
<dbReference type="SignaLink" id="Q14202"/>
<dbReference type="BioGRID-ORCS" id="9203">
    <property type="hits" value="29 hits in 790 CRISPR screens"/>
</dbReference>
<dbReference type="ChiTaRS" id="ZMYM3">
    <property type="organism name" value="human"/>
</dbReference>
<dbReference type="GeneWiki" id="ZMYM3"/>
<dbReference type="GenomeRNAi" id="9203"/>
<dbReference type="Pharos" id="Q14202">
    <property type="development level" value="Tbio"/>
</dbReference>
<dbReference type="PRO" id="PR:Q14202"/>
<dbReference type="Proteomes" id="UP000005640">
    <property type="component" value="Chromosome X"/>
</dbReference>
<dbReference type="RNAct" id="Q14202">
    <property type="molecule type" value="protein"/>
</dbReference>
<dbReference type="Bgee" id="ENSG00000147130">
    <property type="expression patterns" value="Expressed in right adrenal gland and 207 other cell types or tissues"/>
</dbReference>
<dbReference type="ExpressionAtlas" id="Q14202">
    <property type="expression patterns" value="baseline and differential"/>
</dbReference>
<dbReference type="GO" id="GO:0005654">
    <property type="term" value="C:nucleoplasm"/>
    <property type="evidence" value="ECO:0000314"/>
    <property type="project" value="HPA"/>
</dbReference>
<dbReference type="GO" id="GO:0005634">
    <property type="term" value="C:nucleus"/>
    <property type="evidence" value="ECO:0000315"/>
    <property type="project" value="UniProtKB"/>
</dbReference>
<dbReference type="GO" id="GO:0003677">
    <property type="term" value="F:DNA binding"/>
    <property type="evidence" value="ECO:0000304"/>
    <property type="project" value="ProtInc"/>
</dbReference>
<dbReference type="GO" id="GO:0008270">
    <property type="term" value="F:zinc ion binding"/>
    <property type="evidence" value="ECO:0007669"/>
    <property type="project" value="UniProtKB-KW"/>
</dbReference>
<dbReference type="GO" id="GO:0007010">
    <property type="term" value="P:cytoskeleton organization"/>
    <property type="evidence" value="ECO:0000315"/>
    <property type="project" value="UniProtKB"/>
</dbReference>
<dbReference type="GO" id="GO:0022604">
    <property type="term" value="P:regulation of cell morphogenesis"/>
    <property type="evidence" value="ECO:0000315"/>
    <property type="project" value="UniProtKB"/>
</dbReference>
<dbReference type="InterPro" id="IPR021893">
    <property type="entry name" value="DUF3504"/>
</dbReference>
<dbReference type="InterPro" id="IPR011017">
    <property type="entry name" value="TRASH_dom"/>
</dbReference>
<dbReference type="InterPro" id="IPR010507">
    <property type="entry name" value="Znf_MYM"/>
</dbReference>
<dbReference type="InterPro" id="IPR051284">
    <property type="entry name" value="ZnF_MYMT-QRICH1"/>
</dbReference>
<dbReference type="PANTHER" id="PTHR45736">
    <property type="entry name" value="ZINC FINGER MYM-TYPE PROTEIN"/>
    <property type="match status" value="1"/>
</dbReference>
<dbReference type="PANTHER" id="PTHR45736:SF3">
    <property type="entry name" value="ZINC FINGER MYM-TYPE PROTEIN 3"/>
    <property type="match status" value="1"/>
</dbReference>
<dbReference type="Pfam" id="PF12012">
    <property type="entry name" value="DUF3504"/>
    <property type="match status" value="1"/>
</dbReference>
<dbReference type="Pfam" id="PF06467">
    <property type="entry name" value="zf-FCS"/>
    <property type="match status" value="9"/>
</dbReference>
<dbReference type="SMART" id="SM00746">
    <property type="entry name" value="TRASH"/>
    <property type="match status" value="10"/>
</dbReference>
<dbReference type="SUPFAM" id="SSF57716">
    <property type="entry name" value="Glucocorticoid receptor-like (DNA-binding domain)"/>
    <property type="match status" value="1"/>
</dbReference>
<feature type="chain" id="PRO_0000191378" description="Zinc finger MYM-type protein 3">
    <location>
        <begin position="1"/>
        <end position="1370"/>
    </location>
</feature>
<feature type="zinc finger region" description="MYM-type 1">
    <location>
        <begin position="332"/>
        <end position="366"/>
    </location>
</feature>
<feature type="zinc finger region" description="MYM-type 2">
    <location>
        <begin position="378"/>
        <end position="422"/>
    </location>
</feature>
<feature type="zinc finger region" description="MYM-type 3">
    <location>
        <begin position="429"/>
        <end position="464"/>
    </location>
</feature>
<feature type="zinc finger region" description="MYM-type 4">
    <location>
        <begin position="477"/>
        <end position="511"/>
    </location>
</feature>
<feature type="zinc finger region" description="MYM-type 5">
    <location>
        <begin position="521"/>
        <end position="559"/>
    </location>
</feature>
<feature type="zinc finger region" description="MYM-type 6">
    <location>
        <begin position="567"/>
        <end position="604"/>
    </location>
</feature>
<feature type="zinc finger region" description="MYM-type 7">
    <location>
        <begin position="612"/>
        <end position="646"/>
    </location>
</feature>
<feature type="zinc finger region" description="MYM-type 8">
    <location>
        <begin position="653"/>
        <end position="692"/>
    </location>
</feature>
<feature type="zinc finger region" description="MYM-type 9">
    <location>
        <begin position="699"/>
        <end position="733"/>
    </location>
</feature>
<feature type="region of interest" description="Disordered" evidence="1">
    <location>
        <begin position="1"/>
        <end position="72"/>
    </location>
</feature>
<feature type="region of interest" description="Disordered" evidence="1">
    <location>
        <begin position="90"/>
        <end position="301"/>
    </location>
</feature>
<feature type="region of interest" description="Disordered" evidence="1">
    <location>
        <begin position="759"/>
        <end position="830"/>
    </location>
</feature>
<feature type="compositionally biased region" description="Low complexity" evidence="1">
    <location>
        <begin position="1"/>
        <end position="12"/>
    </location>
</feature>
<feature type="compositionally biased region" description="Low complexity" evidence="1">
    <location>
        <begin position="52"/>
        <end position="61"/>
    </location>
</feature>
<feature type="compositionally biased region" description="Basic and acidic residues" evidence="1">
    <location>
        <begin position="230"/>
        <end position="253"/>
    </location>
</feature>
<feature type="compositionally biased region" description="Acidic residues" evidence="1">
    <location>
        <begin position="263"/>
        <end position="279"/>
    </location>
</feature>
<feature type="compositionally biased region" description="Polar residues" evidence="1">
    <location>
        <begin position="759"/>
        <end position="794"/>
    </location>
</feature>
<feature type="compositionally biased region" description="Pro residues" evidence="1">
    <location>
        <begin position="815"/>
        <end position="826"/>
    </location>
</feature>
<feature type="modified residue" description="Phosphoserine" evidence="11 12">
    <location>
        <position position="263"/>
    </location>
</feature>
<feature type="modified residue" description="Phosphoserine" evidence="11 12">
    <location>
        <position position="267"/>
    </location>
</feature>
<feature type="modified residue" description="Phosphoserine" evidence="12 13">
    <location>
        <position position="464"/>
    </location>
</feature>
<feature type="modified residue" description="Phosphothreonine" evidence="13">
    <location>
        <position position="795"/>
    </location>
</feature>
<feature type="modified residue" description="Phosphothreonine" evidence="13 14">
    <location>
        <position position="817"/>
    </location>
</feature>
<feature type="modified residue" description="Phosphothreonine" evidence="13">
    <location>
        <position position="826"/>
    </location>
</feature>
<feature type="cross-link" description="Glycyl lysine isopeptide (Lys-Gly) (interchain with G-Cter in SUMO2)" evidence="15">
    <location>
        <position position="308"/>
    </location>
</feature>
<feature type="cross-link" description="Glycyl lysine isopeptide (Lys-Gly) (interchain with G-Cter in SUMO2)" evidence="15">
    <location>
        <position position="320"/>
    </location>
</feature>
<feature type="cross-link" description="Glycyl lysine isopeptide (Lys-Gly) (interchain with G-Cter in SUMO2)" evidence="15">
    <location>
        <position position="328"/>
    </location>
</feature>
<feature type="cross-link" description="Glycyl lysine isopeptide (Lys-Gly) (interchain with G-Cter in SUMO2)" evidence="15">
    <location>
        <position position="778"/>
    </location>
</feature>
<feature type="cross-link" description="Glycyl lysine isopeptide (Lys-Gly) (interchain with G-Cter in SUMO2)" evidence="15">
    <location>
        <position position="786"/>
    </location>
</feature>
<feature type="cross-link" description="Glycyl lysine isopeptide (Lys-Gly) (interchain with G-Cter in SUMO2)" evidence="15">
    <location>
        <position position="804"/>
    </location>
</feature>
<feature type="cross-link" description="Glycyl lysine isopeptide (Lys-Gly) (interchain with G-Cter in SUMO2)" evidence="15">
    <location>
        <position position="847"/>
    </location>
</feature>
<feature type="cross-link" description="Glycyl lysine isopeptide (Lys-Gly) (interchain with G-Cter in SUMO2)" evidence="15">
    <location>
        <position position="861"/>
    </location>
</feature>
<feature type="cross-link" description="Glycyl lysine isopeptide (Lys-Gly) (interchain with G-Cter in SUMO2)" evidence="15">
    <location>
        <position position="920"/>
    </location>
</feature>
<feature type="cross-link" description="Glycyl lysine isopeptide (Lys-Gly) (interchain with G-Cter in SUMO2)" evidence="15">
    <location>
        <position position="1275"/>
    </location>
</feature>
<feature type="splice variant" id="VSP_043262" description="In isoform 3." evidence="7 9">
    <original>KNTRV</original>
    <variation>VGPRE</variation>
    <location>
        <begin position="491"/>
        <end position="495"/>
    </location>
</feature>
<feature type="splice variant" id="VSP_043263" description="In isoform 3." evidence="7 9">
    <location>
        <begin position="496"/>
        <end position="1370"/>
    </location>
</feature>
<feature type="splice variant" id="VSP_004492" description="In isoform 2." evidence="8">
    <location>
        <begin position="793"/>
        <end position="804"/>
    </location>
</feature>
<feature type="sequence variant" id="VAR_088743" description="In XLID112; uncertain significance." evidence="5">
    <original>D</original>
    <variation>N</variation>
    <location>
        <position position="69"/>
    </location>
</feature>
<feature type="sequence variant" id="VAR_088744" description="In XLID112; uncertain significance." evidence="5">
    <original>R</original>
    <variation>S</variation>
    <location>
        <position position="169"/>
    </location>
</feature>
<feature type="sequence variant" id="VAR_088745" description="In XLID112; uncertain significance; dbSNP:rs2030451038." evidence="5">
    <original>E</original>
    <variation>K</variation>
    <location>
        <position position="241"/>
    </location>
</feature>
<feature type="sequence variant" id="VAR_088746" description="In XLID112; uncertain significance; dbSNP:rs2030411798." evidence="5">
    <original>R</original>
    <variation>H</variation>
    <location>
        <position position="302"/>
    </location>
</feature>
<feature type="sequence variant" id="VAR_088747" description="In XLID112; uncertain significance; dbSNP:rs1200245844." evidence="5">
    <original>R</original>
    <variation>S</variation>
    <location>
        <position position="395"/>
    </location>
</feature>
<feature type="sequence variant" id="VAR_088748" description="In XLID112; uncertain significance; dbSNP:rs2030382289." evidence="5">
    <original>P</original>
    <variation>S</variation>
    <location>
        <position position="398"/>
    </location>
</feature>
<feature type="sequence variant" id="VAR_088749" description="In XLID112; uncertain significance." evidence="5">
    <original>R</original>
    <variation>Q</variation>
    <location>
        <position position="441"/>
    </location>
</feature>
<feature type="sequence variant" id="VAR_088750" description="In XLID112; uncertain significance; dbSNP:rs587777358." evidence="4 5">
    <original>R</original>
    <variation>W</variation>
    <location>
        <position position="441"/>
    </location>
</feature>
<feature type="sequence variant" id="VAR_088751" description="In XLID112; uncertain significance." evidence="5">
    <original>C</original>
    <variation>R</variation>
    <location>
        <position position="454"/>
    </location>
</feature>
<feature type="sequence variant" id="VAR_088752" description="In XLID112; likely benign; dbSNP:rs2147982186." evidence="5">
    <original>R</original>
    <variation>H</variation>
    <location>
        <position position="688"/>
    </location>
</feature>
<feature type="sequence variant" id="VAR_088753" description="In XLID112; uncertain significance." evidence="5">
    <original>E</original>
    <variation>D</variation>
    <location>
        <position position="731"/>
    </location>
</feature>
<feature type="sequence variant" id="VAR_088754" description="In XLID112; uncertain significance." evidence="5">
    <original>Y</original>
    <variation>C</variation>
    <location>
        <position position="752"/>
    </location>
</feature>
<feature type="sequence variant" id="VAR_088755" description="In XLID112; uncertain significance." evidence="5">
    <original>I</original>
    <variation>V</variation>
    <location>
        <position position="932"/>
    </location>
</feature>
<feature type="sequence variant" id="VAR_088756" description="In XLID112; uncertain significance; dbSNP:rs761267440." evidence="5">
    <original>R</original>
    <variation>Q</variation>
    <location>
        <position position="1124"/>
    </location>
</feature>
<feature type="sequence variant" id="VAR_088757" description="In XLID112; uncertain significance." evidence="5">
    <original>Y</original>
    <variation>N</variation>
    <location>
        <position position="1137"/>
    </location>
</feature>
<feature type="sequence variant" id="VAR_088758" description="In XLID112; uncertain significance." evidence="5">
    <original>S</original>
    <variation>N</variation>
    <location>
        <position position="1173"/>
    </location>
</feature>
<feature type="sequence variant" id="VAR_088759" description="In XLID112; uncertain significance." evidence="5">
    <original>V</original>
    <variation>D</variation>
    <location>
        <position position="1202"/>
    </location>
</feature>
<feature type="sequence variant" id="VAR_088760" description="In XLID112; uncertain significance." evidence="5">
    <original>M</original>
    <variation>T</variation>
    <location>
        <position position="1213"/>
    </location>
</feature>
<feature type="sequence variant" id="VAR_088761" description="In XLID112; likely pathogenic; reduced nuclear localization; dbSNP:rs759700551." evidence="5">
    <original>R</original>
    <variation>W</variation>
    <location>
        <position position="1274"/>
    </location>
</feature>
<feature type="sequence variant" id="VAR_088762" description="In XLID112; likely pathogenic; dbSNP:rs879255361." evidence="5">
    <original>R</original>
    <variation>C</variation>
    <location>
        <position position="1294"/>
    </location>
</feature>
<feature type="sequence variant" id="VAR_088763" description="In XLID112; uncertain significance; dbSNP:rs371547376." evidence="5">
    <original>R</original>
    <variation>W</variation>
    <location>
        <position position="1324"/>
    </location>
</feature>
<feature type="sequence variant" id="VAR_088764" description="In XLID112; uncertain significance." evidence="5">
    <original>M</original>
    <variation>I</variation>
    <location>
        <position position="1343"/>
    </location>
</feature>
<feature type="cross-link" description="Glycyl lysine isopeptide (Lys-Gly) (interchain with G-Cter in SUMO2)" evidence="15">
    <location sequence="Q14202-2">
        <position position="786"/>
    </location>
</feature>
<reference key="1">
    <citation type="journal article" date="1996" name="Hum. Mol. Genet.">
        <title>Cloning and characterization of DXS6673E, a candidate gene for X-linked mental retardation in Xq13.1.</title>
        <authorList>
            <person name="van der Maarel S.M."/>
            <person name="Scholten I.H.G.M."/>
            <person name="Huber I."/>
            <person name="Phillippe C."/>
            <person name="Suijkerbuijk R.F."/>
            <person name="Gilgenkrantz S."/>
            <person name="Kere J."/>
            <person name="Cremers F.P.M."/>
            <person name="Ropers H.-H."/>
        </authorList>
    </citation>
    <scope>NUCLEOTIDE SEQUENCE [MRNA] (ISOFORM 2)</scope>
    <source>
        <tissue>Fetal brain</tissue>
    </source>
</reference>
<reference key="2">
    <citation type="journal article" date="1997" name="DNA Res.">
        <title>Prediction of the coding sequences of unidentified human genes. VII. The complete sequences of 100 new cDNA clones from brain which can code for large proteins in vitro.</title>
        <authorList>
            <person name="Nagase T."/>
            <person name="Ishikawa K."/>
            <person name="Nakajima D."/>
            <person name="Ohira M."/>
            <person name="Seki N."/>
            <person name="Miyajima N."/>
            <person name="Tanaka A."/>
            <person name="Kotani H."/>
            <person name="Nomura N."/>
            <person name="Ohara O."/>
        </authorList>
    </citation>
    <scope>NUCLEOTIDE SEQUENCE [LARGE SCALE MRNA] (ISOFORM 1)</scope>
    <source>
        <tissue>Brain</tissue>
    </source>
</reference>
<reference key="3">
    <citation type="submission" date="2003-05" db="EMBL/GenBank/DDBJ databases">
        <title>Cloning of human full-length CDSs in BD Creator(TM) system donor vector.</title>
        <authorList>
            <person name="Kalnine N."/>
            <person name="Chen X."/>
            <person name="Rolfs A."/>
            <person name="Halleck A."/>
            <person name="Hines L."/>
            <person name="Eisenstein S."/>
            <person name="Koundinya M."/>
            <person name="Raphael J."/>
            <person name="Moreira D."/>
            <person name="Kelley T."/>
            <person name="LaBaer J."/>
            <person name="Lin Y."/>
            <person name="Phelan M."/>
            <person name="Farmer A."/>
        </authorList>
    </citation>
    <scope>NUCLEOTIDE SEQUENCE [LARGE SCALE MRNA] (ISOFORM 3)</scope>
</reference>
<reference key="4">
    <citation type="journal article" date="2005" name="Nature">
        <title>The DNA sequence of the human X chromosome.</title>
        <authorList>
            <person name="Ross M.T."/>
            <person name="Grafham D.V."/>
            <person name="Coffey A.J."/>
            <person name="Scherer S."/>
            <person name="McLay K."/>
            <person name="Muzny D."/>
            <person name="Platzer M."/>
            <person name="Howell G.R."/>
            <person name="Burrows C."/>
            <person name="Bird C.P."/>
            <person name="Frankish A."/>
            <person name="Lovell F.L."/>
            <person name="Howe K.L."/>
            <person name="Ashurst J.L."/>
            <person name="Fulton R.S."/>
            <person name="Sudbrak R."/>
            <person name="Wen G."/>
            <person name="Jones M.C."/>
            <person name="Hurles M.E."/>
            <person name="Andrews T.D."/>
            <person name="Scott C.E."/>
            <person name="Searle S."/>
            <person name="Ramser J."/>
            <person name="Whittaker A."/>
            <person name="Deadman R."/>
            <person name="Carter N.P."/>
            <person name="Hunt S.E."/>
            <person name="Chen R."/>
            <person name="Cree A."/>
            <person name="Gunaratne P."/>
            <person name="Havlak P."/>
            <person name="Hodgson A."/>
            <person name="Metzker M.L."/>
            <person name="Richards S."/>
            <person name="Scott G."/>
            <person name="Steffen D."/>
            <person name="Sodergren E."/>
            <person name="Wheeler D.A."/>
            <person name="Worley K.C."/>
            <person name="Ainscough R."/>
            <person name="Ambrose K.D."/>
            <person name="Ansari-Lari M.A."/>
            <person name="Aradhya S."/>
            <person name="Ashwell R.I."/>
            <person name="Babbage A.K."/>
            <person name="Bagguley C.L."/>
            <person name="Ballabio A."/>
            <person name="Banerjee R."/>
            <person name="Barker G.E."/>
            <person name="Barlow K.F."/>
            <person name="Barrett I.P."/>
            <person name="Bates K.N."/>
            <person name="Beare D.M."/>
            <person name="Beasley H."/>
            <person name="Beasley O."/>
            <person name="Beck A."/>
            <person name="Bethel G."/>
            <person name="Blechschmidt K."/>
            <person name="Brady N."/>
            <person name="Bray-Allen S."/>
            <person name="Bridgeman A.M."/>
            <person name="Brown A.J."/>
            <person name="Brown M.J."/>
            <person name="Bonnin D."/>
            <person name="Bruford E.A."/>
            <person name="Buhay C."/>
            <person name="Burch P."/>
            <person name="Burford D."/>
            <person name="Burgess J."/>
            <person name="Burrill W."/>
            <person name="Burton J."/>
            <person name="Bye J.M."/>
            <person name="Carder C."/>
            <person name="Carrel L."/>
            <person name="Chako J."/>
            <person name="Chapman J.C."/>
            <person name="Chavez D."/>
            <person name="Chen E."/>
            <person name="Chen G."/>
            <person name="Chen Y."/>
            <person name="Chen Z."/>
            <person name="Chinault C."/>
            <person name="Ciccodicola A."/>
            <person name="Clark S.Y."/>
            <person name="Clarke G."/>
            <person name="Clee C.M."/>
            <person name="Clegg S."/>
            <person name="Clerc-Blankenburg K."/>
            <person name="Clifford K."/>
            <person name="Cobley V."/>
            <person name="Cole C.G."/>
            <person name="Conquer J.S."/>
            <person name="Corby N."/>
            <person name="Connor R.E."/>
            <person name="David R."/>
            <person name="Davies J."/>
            <person name="Davis C."/>
            <person name="Davis J."/>
            <person name="Delgado O."/>
            <person name="Deshazo D."/>
            <person name="Dhami P."/>
            <person name="Ding Y."/>
            <person name="Dinh H."/>
            <person name="Dodsworth S."/>
            <person name="Draper H."/>
            <person name="Dugan-Rocha S."/>
            <person name="Dunham A."/>
            <person name="Dunn M."/>
            <person name="Durbin K.J."/>
            <person name="Dutta I."/>
            <person name="Eades T."/>
            <person name="Ellwood M."/>
            <person name="Emery-Cohen A."/>
            <person name="Errington H."/>
            <person name="Evans K.L."/>
            <person name="Faulkner L."/>
            <person name="Francis F."/>
            <person name="Frankland J."/>
            <person name="Fraser A.E."/>
            <person name="Galgoczy P."/>
            <person name="Gilbert J."/>
            <person name="Gill R."/>
            <person name="Gloeckner G."/>
            <person name="Gregory S.G."/>
            <person name="Gribble S."/>
            <person name="Griffiths C."/>
            <person name="Grocock R."/>
            <person name="Gu Y."/>
            <person name="Gwilliam R."/>
            <person name="Hamilton C."/>
            <person name="Hart E.A."/>
            <person name="Hawes A."/>
            <person name="Heath P.D."/>
            <person name="Heitmann K."/>
            <person name="Hennig S."/>
            <person name="Hernandez J."/>
            <person name="Hinzmann B."/>
            <person name="Ho S."/>
            <person name="Hoffs M."/>
            <person name="Howden P.J."/>
            <person name="Huckle E.J."/>
            <person name="Hume J."/>
            <person name="Hunt P.J."/>
            <person name="Hunt A.R."/>
            <person name="Isherwood J."/>
            <person name="Jacob L."/>
            <person name="Johnson D."/>
            <person name="Jones S."/>
            <person name="de Jong P.J."/>
            <person name="Joseph S.S."/>
            <person name="Keenan S."/>
            <person name="Kelly S."/>
            <person name="Kershaw J.K."/>
            <person name="Khan Z."/>
            <person name="Kioschis P."/>
            <person name="Klages S."/>
            <person name="Knights A.J."/>
            <person name="Kosiura A."/>
            <person name="Kovar-Smith C."/>
            <person name="Laird G.K."/>
            <person name="Langford C."/>
            <person name="Lawlor S."/>
            <person name="Leversha M."/>
            <person name="Lewis L."/>
            <person name="Liu W."/>
            <person name="Lloyd C."/>
            <person name="Lloyd D.M."/>
            <person name="Loulseged H."/>
            <person name="Loveland J.E."/>
            <person name="Lovell J.D."/>
            <person name="Lozado R."/>
            <person name="Lu J."/>
            <person name="Lyne R."/>
            <person name="Ma J."/>
            <person name="Maheshwari M."/>
            <person name="Matthews L.H."/>
            <person name="McDowall J."/>
            <person name="McLaren S."/>
            <person name="McMurray A."/>
            <person name="Meidl P."/>
            <person name="Meitinger T."/>
            <person name="Milne S."/>
            <person name="Miner G."/>
            <person name="Mistry S.L."/>
            <person name="Morgan M."/>
            <person name="Morris S."/>
            <person name="Mueller I."/>
            <person name="Mullikin J.C."/>
            <person name="Nguyen N."/>
            <person name="Nordsiek G."/>
            <person name="Nyakatura G."/>
            <person name="O'dell C.N."/>
            <person name="Okwuonu G."/>
            <person name="Palmer S."/>
            <person name="Pandian R."/>
            <person name="Parker D."/>
            <person name="Parrish J."/>
            <person name="Pasternak S."/>
            <person name="Patel D."/>
            <person name="Pearce A.V."/>
            <person name="Pearson D.M."/>
            <person name="Pelan S.E."/>
            <person name="Perez L."/>
            <person name="Porter K.M."/>
            <person name="Ramsey Y."/>
            <person name="Reichwald K."/>
            <person name="Rhodes S."/>
            <person name="Ridler K.A."/>
            <person name="Schlessinger D."/>
            <person name="Schueler M.G."/>
            <person name="Sehra H.K."/>
            <person name="Shaw-Smith C."/>
            <person name="Shen H."/>
            <person name="Sheridan E.M."/>
            <person name="Shownkeen R."/>
            <person name="Skuce C.D."/>
            <person name="Smith M.L."/>
            <person name="Sotheran E.C."/>
            <person name="Steingruber H.E."/>
            <person name="Steward C.A."/>
            <person name="Storey R."/>
            <person name="Swann R.M."/>
            <person name="Swarbreck D."/>
            <person name="Tabor P.E."/>
            <person name="Taudien S."/>
            <person name="Taylor T."/>
            <person name="Teague B."/>
            <person name="Thomas K."/>
            <person name="Thorpe A."/>
            <person name="Timms K."/>
            <person name="Tracey A."/>
            <person name="Trevanion S."/>
            <person name="Tromans A.C."/>
            <person name="d'Urso M."/>
            <person name="Verduzco D."/>
            <person name="Villasana D."/>
            <person name="Waldron L."/>
            <person name="Wall M."/>
            <person name="Wang Q."/>
            <person name="Warren J."/>
            <person name="Warry G.L."/>
            <person name="Wei X."/>
            <person name="West A."/>
            <person name="Whitehead S.L."/>
            <person name="Whiteley M.N."/>
            <person name="Wilkinson J.E."/>
            <person name="Willey D.L."/>
            <person name="Williams G."/>
            <person name="Williams L."/>
            <person name="Williamson A."/>
            <person name="Williamson H."/>
            <person name="Wilming L."/>
            <person name="Woodmansey R.L."/>
            <person name="Wray P.W."/>
            <person name="Yen J."/>
            <person name="Zhang J."/>
            <person name="Zhou J."/>
            <person name="Zoghbi H."/>
            <person name="Zorilla S."/>
            <person name="Buck D."/>
            <person name="Reinhardt R."/>
            <person name="Poustka A."/>
            <person name="Rosenthal A."/>
            <person name="Lehrach H."/>
            <person name="Meindl A."/>
            <person name="Minx P.J."/>
            <person name="Hillier L.W."/>
            <person name="Willard H.F."/>
            <person name="Wilson R.K."/>
            <person name="Waterston R.H."/>
            <person name="Rice C.M."/>
            <person name="Vaudin M."/>
            <person name="Coulson A."/>
            <person name="Nelson D.L."/>
            <person name="Weinstock G."/>
            <person name="Sulston J.E."/>
            <person name="Durbin R.M."/>
            <person name="Hubbard T."/>
            <person name="Gibbs R.A."/>
            <person name="Beck S."/>
            <person name="Rogers J."/>
            <person name="Bentley D.R."/>
        </authorList>
    </citation>
    <scope>NUCLEOTIDE SEQUENCE [LARGE SCALE GENOMIC DNA]</scope>
</reference>
<reference key="5">
    <citation type="submission" date="2005-09" db="EMBL/GenBank/DDBJ databases">
        <authorList>
            <person name="Mural R.J."/>
            <person name="Istrail S."/>
            <person name="Sutton G.G."/>
            <person name="Florea L."/>
            <person name="Halpern A.L."/>
            <person name="Mobarry C.M."/>
            <person name="Lippert R."/>
            <person name="Walenz B."/>
            <person name="Shatkay H."/>
            <person name="Dew I."/>
            <person name="Miller J.R."/>
            <person name="Flanigan M.J."/>
            <person name="Edwards N.J."/>
            <person name="Bolanos R."/>
            <person name="Fasulo D."/>
            <person name="Halldorsson B.V."/>
            <person name="Hannenhalli S."/>
            <person name="Turner R."/>
            <person name="Yooseph S."/>
            <person name="Lu F."/>
            <person name="Nusskern D.R."/>
            <person name="Shue B.C."/>
            <person name="Zheng X.H."/>
            <person name="Zhong F."/>
            <person name="Delcher A.L."/>
            <person name="Huson D.H."/>
            <person name="Kravitz S.A."/>
            <person name="Mouchard L."/>
            <person name="Reinert K."/>
            <person name="Remington K.A."/>
            <person name="Clark A.G."/>
            <person name="Waterman M.S."/>
            <person name="Eichler E.E."/>
            <person name="Adams M.D."/>
            <person name="Hunkapiller M.W."/>
            <person name="Myers E.W."/>
            <person name="Venter J.C."/>
        </authorList>
    </citation>
    <scope>NUCLEOTIDE SEQUENCE [LARGE SCALE GENOMIC DNA]</scope>
</reference>
<reference key="6">
    <citation type="journal article" date="2004" name="Genome Res.">
        <title>The status, quality, and expansion of the NIH full-length cDNA project: the Mammalian Gene Collection (MGC).</title>
        <authorList>
            <consortium name="The MGC Project Team"/>
        </authorList>
    </citation>
    <scope>NUCLEOTIDE SEQUENCE [LARGE SCALE MRNA] (ISOFORMS 1 AND 3)</scope>
    <source>
        <tissue>Lymph</tissue>
        <tissue>Muscle</tissue>
    </source>
</reference>
<reference key="7">
    <citation type="journal article" date="2003" name="J. Biol. Chem.">
        <title>A candidate X-linked mental retardation gene is a component of a new family of histone deacetylase-containing complexes.</title>
        <authorList>
            <person name="Hakimi M.-A."/>
            <person name="Dong Y."/>
            <person name="Lane W.S."/>
            <person name="Speicher D.W."/>
            <person name="Shiekhattar R."/>
        </authorList>
    </citation>
    <scope>IDENTIFICATION IN THE BHC COMPLEX WITH GSE1; GTF2I; HDAC1; HDAC2; HMG20B; KDM1A; RCOR1; PHF21A; ZNF217 AND ZMYM2</scope>
</reference>
<reference key="8">
    <citation type="journal article" date="2006" name="Cell">
        <title>Global, in vivo, and site-specific phosphorylation dynamics in signaling networks.</title>
        <authorList>
            <person name="Olsen J.V."/>
            <person name="Blagoev B."/>
            <person name="Gnad F."/>
            <person name="Macek B."/>
            <person name="Kumar C."/>
            <person name="Mortensen P."/>
            <person name="Mann M."/>
        </authorList>
    </citation>
    <scope>PHOSPHORYLATION [LARGE SCALE ANALYSIS] AT SER-263 AND SER-267</scope>
    <scope>IDENTIFICATION BY MASS SPECTROMETRY [LARGE SCALE ANALYSIS]</scope>
    <source>
        <tissue>Cervix carcinoma</tissue>
    </source>
</reference>
<reference key="9">
    <citation type="journal article" date="2008" name="Proc. Natl. Acad. Sci. U.S.A.">
        <title>A quantitative atlas of mitotic phosphorylation.</title>
        <authorList>
            <person name="Dephoure N."/>
            <person name="Zhou C."/>
            <person name="Villen J."/>
            <person name="Beausoleil S.A."/>
            <person name="Bakalarski C.E."/>
            <person name="Elledge S.J."/>
            <person name="Gygi S.P."/>
        </authorList>
    </citation>
    <scope>PHOSPHORYLATION [LARGE SCALE ANALYSIS] AT SER-263; SER-267 AND SER-464</scope>
    <scope>IDENTIFICATION BY MASS SPECTROMETRY [LARGE SCALE ANALYSIS]</scope>
    <source>
        <tissue>Cervix carcinoma</tissue>
    </source>
</reference>
<reference key="10">
    <citation type="journal article" date="2009" name="Anal. Chem.">
        <title>Lys-N and trypsin cover complementary parts of the phosphoproteome in a refined SCX-based approach.</title>
        <authorList>
            <person name="Gauci S."/>
            <person name="Helbig A.O."/>
            <person name="Slijper M."/>
            <person name="Krijgsveld J."/>
            <person name="Heck A.J."/>
            <person name="Mohammed S."/>
        </authorList>
    </citation>
    <scope>IDENTIFICATION BY MASS SPECTROMETRY [LARGE SCALE ANALYSIS]</scope>
</reference>
<reference key="11">
    <citation type="journal article" date="2010" name="Sci. Signal.">
        <title>Quantitative phosphoproteomics reveals widespread full phosphorylation site occupancy during mitosis.</title>
        <authorList>
            <person name="Olsen J.V."/>
            <person name="Vermeulen M."/>
            <person name="Santamaria A."/>
            <person name="Kumar C."/>
            <person name="Miller M.L."/>
            <person name="Jensen L.J."/>
            <person name="Gnad F."/>
            <person name="Cox J."/>
            <person name="Jensen T.S."/>
            <person name="Nigg E.A."/>
            <person name="Brunak S."/>
            <person name="Mann M."/>
        </authorList>
    </citation>
    <scope>IDENTIFICATION BY MASS SPECTROMETRY [LARGE SCALE ANALYSIS]</scope>
    <source>
        <tissue>Cervix carcinoma</tissue>
    </source>
</reference>
<reference key="12">
    <citation type="journal article" date="2011" name="BMC Biol.">
        <title>Identification and characterization of a set of conserved and new regulators of cytoskeletal organisation, cell morphology and migration.</title>
        <authorList>
            <person name="Bai S.W."/>
            <person name="Herrera-Abreu M.T."/>
            <person name="Rohn J.L."/>
            <person name="Racine V."/>
            <person name="Tajadura V."/>
            <person name="Suryavanshi N."/>
            <person name="Bechtel S."/>
            <person name="Wiemann S."/>
            <person name="Baum B."/>
            <person name="Ridley A.J."/>
        </authorList>
    </citation>
    <scope>FUNCTION</scope>
</reference>
<reference key="13">
    <citation type="journal article" date="2011" name="Sci. Signal.">
        <title>System-wide temporal characterization of the proteome and phosphoproteome of human embryonic stem cell differentiation.</title>
        <authorList>
            <person name="Rigbolt K.T."/>
            <person name="Prokhorova T.A."/>
            <person name="Akimov V."/>
            <person name="Henningsen J."/>
            <person name="Johansen P.T."/>
            <person name="Kratchmarova I."/>
            <person name="Kassem M."/>
            <person name="Mann M."/>
            <person name="Olsen J.V."/>
            <person name="Blagoev B."/>
        </authorList>
    </citation>
    <scope>IDENTIFICATION BY MASS SPECTROMETRY [LARGE SCALE ANALYSIS]</scope>
</reference>
<reference key="14">
    <citation type="journal article" date="2013" name="J. Proteome Res.">
        <title>Toward a comprehensive characterization of a human cancer cell phosphoproteome.</title>
        <authorList>
            <person name="Zhou H."/>
            <person name="Di Palma S."/>
            <person name="Preisinger C."/>
            <person name="Peng M."/>
            <person name="Polat A.N."/>
            <person name="Heck A.J."/>
            <person name="Mohammed S."/>
        </authorList>
    </citation>
    <scope>PHOSPHORYLATION [LARGE SCALE ANALYSIS] AT SER-464; THR-795; THR-817 AND THR-826</scope>
    <scope>IDENTIFICATION BY MASS SPECTROMETRY [LARGE SCALE ANALYSIS]</scope>
    <source>
        <tissue>Cervix carcinoma</tissue>
        <tissue>Erythroleukemia</tissue>
    </source>
</reference>
<reference key="15">
    <citation type="journal article" date="2014" name="J. Proteomics">
        <title>An enzyme assisted RP-RPLC approach for in-depth analysis of human liver phosphoproteome.</title>
        <authorList>
            <person name="Bian Y."/>
            <person name="Song C."/>
            <person name="Cheng K."/>
            <person name="Dong M."/>
            <person name="Wang F."/>
            <person name="Huang J."/>
            <person name="Sun D."/>
            <person name="Wang L."/>
            <person name="Ye M."/>
            <person name="Zou H."/>
        </authorList>
    </citation>
    <scope>PHOSPHORYLATION [LARGE SCALE ANALYSIS] AT THR-817</scope>
    <scope>IDENTIFICATION BY MASS SPECTROMETRY [LARGE SCALE ANALYSIS]</scope>
    <source>
        <tissue>Liver</tissue>
    </source>
</reference>
<reference key="16">
    <citation type="journal article" date="2014" name="Orphanet J. Rare Dis.">
        <title>X-exome sequencing in Finnish families with intellectual disability--four novel mutations and two novel syndromic phenotypes.</title>
        <authorList>
            <person name="Philips A.K."/>
            <person name="Siren A."/>
            <person name="Avela K."/>
            <person name="Somer M."/>
            <person name="Peippo M."/>
            <person name="Ahvenainen M."/>
            <person name="Doagu F."/>
            <person name="Arvio M."/>
            <person name="Kaeaeriaeinen H."/>
            <person name="Van Esch H."/>
            <person name="Froyen G."/>
            <person name="Haas S.A."/>
            <person name="Hu H."/>
            <person name="Kalscheuer V.M."/>
            <person name="Jaervelae I."/>
        </authorList>
    </citation>
    <scope>INVOLVEMENT IN XLID112</scope>
    <scope>VARIANT XLID112 TRP-441</scope>
</reference>
<reference key="17">
    <citation type="journal article" date="2017" name="Nat. Struct. Mol. Biol.">
        <title>Site-specific mapping of the human SUMO proteome reveals co-modification with phosphorylation.</title>
        <authorList>
            <person name="Hendriks I.A."/>
            <person name="Lyon D."/>
            <person name="Young C."/>
            <person name="Jensen L.J."/>
            <person name="Vertegaal A.C."/>
            <person name="Nielsen M.L."/>
        </authorList>
    </citation>
    <scope>SUMOYLATION [LARGE SCALE ANALYSIS] AT LYS-308; LYS-320; LYS-328; LYS-778; LYS-786; LYS-804; LYS-847; LYS-861; LYS-920 AND LYS-1275</scope>
    <scope>SUMOYLATION [LARGE SCALE ANALYSIS] AT LYS-786 (ISOFORM 2)</scope>
    <scope>IDENTIFICATION BY MASS SPECTROMETRY [LARGE SCALE ANALYSIS]</scope>
</reference>
<reference key="18">
    <citation type="journal article" date="2023" name="Am. J. Hum. Genet.">
        <title>Deleterious, protein-altering variants in the transcriptional coregulator ZMYM3 in 27 individuals with a neurodevelopmental delay phenotype.</title>
        <authorList>
            <person name="Hiatt S.M."/>
            <person name="Trajkova S."/>
            <person name="Sebastiano M.R."/>
            <person name="Partridge E.C."/>
            <person name="Abidi F.E."/>
            <person name="Anderson A."/>
            <person name="Ansar M."/>
            <person name="Antonarakis S.E."/>
            <person name="Azadi A."/>
            <person name="Bachmann-Gagescu R."/>
            <person name="Bartuli A."/>
            <person name="Benech C."/>
            <person name="Berkowitz J.L."/>
            <person name="Betti M.J."/>
            <person name="Brusco A."/>
            <person name="Cannon A."/>
            <person name="Caron G."/>
            <person name="Chen Y."/>
            <person name="Cochran M.E."/>
            <person name="Coleman T.F."/>
            <person name="Crenshaw M.M."/>
            <person name="Cuisset L."/>
            <person name="Curry C.J."/>
            <person name="Darvish H."/>
            <person name="Demirdas S."/>
            <person name="Descartes M."/>
            <person name="Douglas J."/>
            <person name="Dyment D.A."/>
            <person name="Elloumi H.Z."/>
            <person name="Ermondi G."/>
            <person name="Faoucher M."/>
            <person name="Farrow E.G."/>
            <person name="Felker S.A."/>
            <person name="Fisher H."/>
            <person name="Hurst A.C.E."/>
            <person name="Joset P."/>
            <person name="Kelly M.A."/>
            <person name="Kmoch S."/>
            <person name="Leadem B.R."/>
            <person name="Lyons M.J."/>
            <person name="Macchiaiolo M."/>
            <person name="Magner M."/>
            <person name="Mandrile G."/>
            <person name="Mattioli F."/>
            <person name="McEown M."/>
            <person name="Meadows S.K."/>
            <person name="Medne L."/>
            <person name="Meeks N.J.L."/>
            <person name="Montgomery S."/>
            <person name="Napier M.P."/>
            <person name="Natowicz M."/>
            <person name="Newberry K.M."/>
            <person name="Niceta M."/>
            <person name="Noskova L."/>
            <person name="Nowak C.B."/>
            <person name="Noyes A.G."/>
            <person name="Osmond M."/>
            <person name="Prijoles E.J."/>
            <person name="Pugh J."/>
            <person name="Pullano V."/>
            <person name="Quelin C."/>
            <person name="Rahimi-Aliabadi S."/>
            <person name="Rauch A."/>
            <person name="Redon S."/>
            <person name="Reymond A."/>
            <person name="Schwager C.R."/>
            <person name="Sellars E.A."/>
            <person name="Scheuerle A.E."/>
            <person name="Shukarova-Angelovska E."/>
            <person name="Skraban C."/>
            <person name="Stolerman E."/>
            <person name="Sullivan B.R."/>
            <person name="Tartaglia M."/>
            <person name="Thiffault I."/>
            <person name="Uguen K."/>
            <person name="Umana L.A."/>
            <person name="van Bever Y."/>
            <person name="van der Crabben S.N."/>
            <person name="van Slegtenhorst M.A."/>
            <person name="Waisfisz Q."/>
            <person name="Washington C."/>
            <person name="Rodan L.H."/>
            <person name="Myers R.M."/>
            <person name="Cooper G.M."/>
        </authorList>
    </citation>
    <scope>VARIANTS XLID112 ASN-69; SER-169; LYS-241; HIS-302; SER-395; SER-398; TRP-441; GLN-441; ARG-454; HIS-688; ASP-731; CYS-752; VAL-932; GLN-1124; ASN-1137; ASN-1173; ASP-1202; THR-1213; TRP-1274; CYS-1294; TRP-1324 AND ILE-1343</scope>
    <scope>SUBCELLULAR LOCATION</scope>
</reference>
<proteinExistence type="evidence at protein level"/>
<accession>Q14202</accession>
<accession>D3DVV3</accession>
<accession>O15089</accession>
<accession>Q96E26</accession>
<evidence type="ECO:0000256" key="1">
    <source>
        <dbReference type="SAM" id="MobiDB-lite"/>
    </source>
</evidence>
<evidence type="ECO:0000269" key="2">
    <source>
    </source>
</evidence>
<evidence type="ECO:0000269" key="3">
    <source>
    </source>
</evidence>
<evidence type="ECO:0000269" key="4">
    <source>
    </source>
</evidence>
<evidence type="ECO:0000269" key="5">
    <source>
    </source>
</evidence>
<evidence type="ECO:0000269" key="6">
    <source>
    </source>
</evidence>
<evidence type="ECO:0000303" key="7">
    <source>
    </source>
</evidence>
<evidence type="ECO:0000303" key="8">
    <source>
    </source>
</evidence>
<evidence type="ECO:0000303" key="9">
    <source ref="3"/>
</evidence>
<evidence type="ECO:0000305" key="10"/>
<evidence type="ECO:0007744" key="11">
    <source>
    </source>
</evidence>
<evidence type="ECO:0007744" key="12">
    <source>
    </source>
</evidence>
<evidence type="ECO:0007744" key="13">
    <source>
    </source>
</evidence>
<evidence type="ECO:0007744" key="14">
    <source>
    </source>
</evidence>
<evidence type="ECO:0007744" key="15">
    <source>
    </source>
</evidence>
<name>ZMYM3_HUMAN</name>
<protein>
    <recommendedName>
        <fullName>Zinc finger MYM-type protein 3</fullName>
    </recommendedName>
    <alternativeName>
        <fullName>Zinc finger protein 261</fullName>
    </alternativeName>
</protein>
<comment type="function">
    <text evidence="3">Plays a role in the regulation of cell morphology and cytoskeletal organization.</text>
</comment>
<comment type="subunit">
    <text evidence="2">May be a component of a BHC histone deacetylase complex that contains HDAC1, HDAC2, HMG20B/BRAF35, KDM1A, RCOR1/CoREST, PHF21A/BHC80, ZMYM2, ZNF217, ZMYM3, GSE1 and GTF2I.</text>
</comment>
<comment type="interaction">
    <interactant intactId="EBI-2556139">
        <id>Q14202</id>
    </interactant>
    <interactant intactId="EBI-1056125">
        <id>Q16778</id>
        <label>H2BC21</label>
    </interactant>
    <organismsDiffer>false</organismsDiffer>
    <experiments>2</experiments>
</comment>
<comment type="interaction">
    <interactant intactId="EBI-2556139">
        <id>Q14202</id>
    </interactant>
    <interactant intactId="EBI-399080">
        <id>Q92993</id>
        <label>KAT5</label>
    </interactant>
    <organismsDiffer>false</organismsDiffer>
    <experiments>3</experiments>
</comment>
<comment type="interaction">
    <interactant intactId="EBI-2556139">
        <id>Q14202</id>
    </interactant>
    <interactant intactId="EBI-11742507">
        <id>Q8TAP4-4</id>
        <label>LMO3</label>
    </interactant>
    <organismsDiffer>false</organismsDiffer>
    <experiments>3</experiments>
</comment>
<comment type="interaction">
    <interactant intactId="EBI-2556139">
        <id>Q14202</id>
    </interactant>
    <interactant intactId="EBI-9027329">
        <id>Q5TBB1</id>
        <label>RNASEH2B</label>
    </interactant>
    <organismsDiffer>false</organismsDiffer>
    <experiments>4</experiments>
</comment>
<comment type="interaction">
    <interactant intactId="EBI-2556139">
        <id>Q14202</id>
    </interactant>
    <interactant intactId="EBI-9090795">
        <id>Q15047-2</id>
        <label>SETDB1</label>
    </interactant>
    <organismsDiffer>false</organismsDiffer>
    <experiments>3</experiments>
</comment>
<comment type="interaction">
    <interactant intactId="EBI-2556139">
        <id>Q14202</id>
    </interactant>
    <interactant intactId="EBI-359832">
        <id>P61981</id>
        <label>YWHAG</label>
    </interactant>
    <organismsDiffer>false</organismsDiffer>
    <experiments>3</experiments>
</comment>
<comment type="subcellular location">
    <subcellularLocation>
        <location evidence="5">Nucleus</location>
    </subcellularLocation>
</comment>
<comment type="alternative products">
    <event type="alternative splicing"/>
    <isoform>
        <id>Q14202-1</id>
        <name>1</name>
        <sequence type="displayed"/>
    </isoform>
    <isoform>
        <id>Q14202-2</id>
        <name>2</name>
        <sequence type="described" ref="VSP_004492"/>
    </isoform>
    <isoform>
        <id>Q14202-3</id>
        <name>3</name>
        <sequence type="described" ref="VSP_043262 VSP_043263"/>
    </isoform>
</comment>
<comment type="tissue specificity">
    <text>Most abundant in brain, moderate in muscle and heart, low in other tissues except placenta.</text>
</comment>
<comment type="disease" evidence="4 5">
    <disease id="DI-06714">
        <name>Intellectual developmental disorder, X-linked 112</name>
        <acronym>XLID112</acronym>
        <description>A neurodevelopmental disorder characterized by developmental delay, impaired intellectual development, language and motor delay, autism or autistic traits, and variable dysmorphic features.</description>
        <dbReference type="MIM" id="301111"/>
    </disease>
    <text>The disease is caused by variants affecting the gene represented in this entry.</text>
</comment>
<comment type="disease">
    <text evidence="6">A chromosomal aberration involving ZMYM3 may be a cause of X-linked intellectual disability in Xq13.1. Translocation t(X;13)(q13.1;q31).</text>
</comment>
<comment type="sequence caution" evidence="10">
    <conflict type="erroneous initiation">
        <sequence resource="EMBL-CDS" id="BAA20839"/>
    </conflict>
    <text>Extended N-terminus.</text>
</comment>
<organism>
    <name type="scientific">Homo sapiens</name>
    <name type="common">Human</name>
    <dbReference type="NCBI Taxonomy" id="9606"/>
    <lineage>
        <taxon>Eukaryota</taxon>
        <taxon>Metazoa</taxon>
        <taxon>Chordata</taxon>
        <taxon>Craniata</taxon>
        <taxon>Vertebrata</taxon>
        <taxon>Euteleostomi</taxon>
        <taxon>Mammalia</taxon>
        <taxon>Eutheria</taxon>
        <taxon>Euarchontoglires</taxon>
        <taxon>Primates</taxon>
        <taxon>Haplorrhini</taxon>
        <taxon>Catarrhini</taxon>
        <taxon>Hominidae</taxon>
        <taxon>Homo</taxon>
    </lineage>
</organism>
<keyword id="KW-0025">Alternative splicing</keyword>
<keyword id="KW-1269">Autism</keyword>
<keyword id="KW-1268">Autism spectrum disorder</keyword>
<keyword id="KW-0160">Chromosomal rearrangement</keyword>
<keyword id="KW-0225">Disease variant</keyword>
<keyword id="KW-0991">Intellectual disability</keyword>
<keyword id="KW-1017">Isopeptide bond</keyword>
<keyword id="KW-0479">Metal-binding</keyword>
<keyword id="KW-0539">Nucleus</keyword>
<keyword id="KW-0597">Phosphoprotein</keyword>
<keyword id="KW-1267">Proteomics identification</keyword>
<keyword id="KW-1185">Reference proteome</keyword>
<keyword id="KW-0677">Repeat</keyword>
<keyword id="KW-0832">Ubl conjugation</keyword>
<keyword id="KW-0862">Zinc</keyword>
<keyword id="KW-0863">Zinc-finger</keyword>
<sequence>MDPSDFPSPFDPLTLPEKPLAGDLPVDMEFGEDLLESQTAPTRGWAPPGPSPSSGALDLLDTPAGLEKDPGVLDGATELLGLGGLLYKAPSPPEVDHGPEGTLAWDAGDQTLEPGPGGQTPEVVPPDPGAGANSCSPEGLLEPLAPDSPITLQSPHIEEEETTSIATARRGSPGQEEELPQGQPQSPNAPPSPSVGETLGDGINSSQTKPGGSSPPAHPSLPGDGLTAKASEKPPERKRSERVRRAEPPKPEVVDSTESIPVSDEDSDAMVDDPNDEDFVPFRPRRSPRMSLRSSVSQRAGRSAVGTKMTCAHCRTPLQKGQTAYQRKGLPQLFCSSSCLTTFSKKPSGKKTCTFCKKEIWNTKDSVVAQTGSGGSFHEFCTSVCLSLYEAQQQRPIPQSGDPADATRCSICQKTGEVLHEVSNGSVVHRLCSDSCFSKFRANKGLKTNCCDQCGAYIYTKTGSPGPELLFHEGQQKRFCNTTCLGAYKKKNTRVYPCVWCKTLCKNFEMLSHVDRNGKTSLFCSLCCTTSYKVKQAGLTGPPRPCSFCRRSLSDPCYYNKVDRTVYQFCSPSCWTKFQRTSPEGGIHLSCHYCHSLFSGKPEVLDWQDQVFQFCCRDCCEDFKRLRGVVSQCEHCRQEKLLHEKLRFSGVEKSFCSEGCVLLYKQDFTKKLGLCCITCTYCSQTCQRGVTEQLDGSTWDFCSEDCKSKYLLWYCKAARCHACKRQGKLLETIHWRGQIRHFCNQQCLLRFYSQQNQPNLDTQSGPESLLNSQSPESKPQTPSQTKVENSNTVRTPEENGNLGKIPVKTRSAPTAPTPPPPPPPATPRKNKAAMCKPLMQNRGVSCKVEMKSKGSQTEEWKPQVIVLPIPVPIFVPVPMHLYCQKVPVPFSMPIPVPVPMFLPTTLESTDKIVETIEELKVKIPSNPLEADILAMAEMIAEAEELDKASSDLCDLVSNQSAEGLLEDCDLFGPARDDVLAMAVKMANVLDEPGQDLEADFPKNPLDINPSVDFLFDCGLVGPEDVSTEQDLPRTMRKGQKRLVLSESCSRDSMSSQPSCTGLNYSYGVNAWKCWVQSKYANGETSKGDELRFGPKPMRIKEDILACSAAELNYGLAQFVREITRPNGERYEPDSIYYLCLGIQQYLLENNRMVNIFTDLYYLTFVQELNKSLSTWQPTLLPNNTVFSRVEEEHLWECKQLGVYSPFVLLNTLMFFNTKFFGLQTAEEHMQLSFTNVVRQSRKCTTPRGTTKVVSIRYYAPVRQRKGRDTGPGKRKREDEAPILEQRENRMNPLRCPVKFYEFYLSKCPESLRTRNDVFYLQPERSCIAESPLWYSVIPMDRSMLESMLNRILAVREIYEELGRPGEEDLD</sequence>
<gene>
    <name type="primary">ZMYM3</name>
    <name type="synonym">DXS6673E</name>
    <name type="synonym">KIAA0385</name>
    <name type="synonym">ZNF261</name>
</gene>